<reference key="1">
    <citation type="journal article" date="2002" name="Nature">
        <title>The genome sequence of Schizosaccharomyces pombe.</title>
        <authorList>
            <person name="Wood V."/>
            <person name="Gwilliam R."/>
            <person name="Rajandream M.A."/>
            <person name="Lyne M.H."/>
            <person name="Lyne R."/>
            <person name="Stewart A."/>
            <person name="Sgouros J.G."/>
            <person name="Peat N."/>
            <person name="Hayles J."/>
            <person name="Baker S.G."/>
            <person name="Basham D."/>
            <person name="Bowman S."/>
            <person name="Brooks K."/>
            <person name="Brown D."/>
            <person name="Brown S."/>
            <person name="Chillingworth T."/>
            <person name="Churcher C.M."/>
            <person name="Collins M."/>
            <person name="Connor R."/>
            <person name="Cronin A."/>
            <person name="Davis P."/>
            <person name="Feltwell T."/>
            <person name="Fraser A."/>
            <person name="Gentles S."/>
            <person name="Goble A."/>
            <person name="Hamlin N."/>
            <person name="Harris D.E."/>
            <person name="Hidalgo J."/>
            <person name="Hodgson G."/>
            <person name="Holroyd S."/>
            <person name="Hornsby T."/>
            <person name="Howarth S."/>
            <person name="Huckle E.J."/>
            <person name="Hunt S."/>
            <person name="Jagels K."/>
            <person name="James K.D."/>
            <person name="Jones L."/>
            <person name="Jones M."/>
            <person name="Leather S."/>
            <person name="McDonald S."/>
            <person name="McLean J."/>
            <person name="Mooney P."/>
            <person name="Moule S."/>
            <person name="Mungall K.L."/>
            <person name="Murphy L.D."/>
            <person name="Niblett D."/>
            <person name="Odell C."/>
            <person name="Oliver K."/>
            <person name="O'Neil S."/>
            <person name="Pearson D."/>
            <person name="Quail M.A."/>
            <person name="Rabbinowitsch E."/>
            <person name="Rutherford K.M."/>
            <person name="Rutter S."/>
            <person name="Saunders D."/>
            <person name="Seeger K."/>
            <person name="Sharp S."/>
            <person name="Skelton J."/>
            <person name="Simmonds M.N."/>
            <person name="Squares R."/>
            <person name="Squares S."/>
            <person name="Stevens K."/>
            <person name="Taylor K."/>
            <person name="Taylor R.G."/>
            <person name="Tivey A."/>
            <person name="Walsh S.V."/>
            <person name="Warren T."/>
            <person name="Whitehead S."/>
            <person name="Woodward J.R."/>
            <person name="Volckaert G."/>
            <person name="Aert R."/>
            <person name="Robben J."/>
            <person name="Grymonprez B."/>
            <person name="Weltjens I."/>
            <person name="Vanstreels E."/>
            <person name="Rieger M."/>
            <person name="Schaefer M."/>
            <person name="Mueller-Auer S."/>
            <person name="Gabel C."/>
            <person name="Fuchs M."/>
            <person name="Duesterhoeft A."/>
            <person name="Fritzc C."/>
            <person name="Holzer E."/>
            <person name="Moestl D."/>
            <person name="Hilbert H."/>
            <person name="Borzym K."/>
            <person name="Langer I."/>
            <person name="Beck A."/>
            <person name="Lehrach H."/>
            <person name="Reinhardt R."/>
            <person name="Pohl T.M."/>
            <person name="Eger P."/>
            <person name="Zimmermann W."/>
            <person name="Wedler H."/>
            <person name="Wambutt R."/>
            <person name="Purnelle B."/>
            <person name="Goffeau A."/>
            <person name="Cadieu E."/>
            <person name="Dreano S."/>
            <person name="Gloux S."/>
            <person name="Lelaure V."/>
            <person name="Mottier S."/>
            <person name="Galibert F."/>
            <person name="Aves S.J."/>
            <person name="Xiang Z."/>
            <person name="Hunt C."/>
            <person name="Moore K."/>
            <person name="Hurst S.M."/>
            <person name="Lucas M."/>
            <person name="Rochet M."/>
            <person name="Gaillardin C."/>
            <person name="Tallada V.A."/>
            <person name="Garzon A."/>
            <person name="Thode G."/>
            <person name="Daga R.R."/>
            <person name="Cruzado L."/>
            <person name="Jimenez J."/>
            <person name="Sanchez M."/>
            <person name="del Rey F."/>
            <person name="Benito J."/>
            <person name="Dominguez A."/>
            <person name="Revuelta J.L."/>
            <person name="Moreno S."/>
            <person name="Armstrong J."/>
            <person name="Forsburg S.L."/>
            <person name="Cerutti L."/>
            <person name="Lowe T."/>
            <person name="McCombie W.R."/>
            <person name="Paulsen I."/>
            <person name="Potashkin J."/>
            <person name="Shpakovski G.V."/>
            <person name="Ussery D."/>
            <person name="Barrell B.G."/>
            <person name="Nurse P."/>
        </authorList>
    </citation>
    <scope>NUCLEOTIDE SEQUENCE [LARGE SCALE GENOMIC DNA]</scope>
    <source>
        <strain>972 / ATCC 24843</strain>
    </source>
</reference>
<reference key="2">
    <citation type="journal article" date="2008" name="J. Proteome Res.">
        <title>Phosphoproteome analysis of fission yeast.</title>
        <authorList>
            <person name="Wilson-Grady J.T."/>
            <person name="Villen J."/>
            <person name="Gygi S.P."/>
        </authorList>
    </citation>
    <scope>PHOSPHORYLATION [LARGE SCALE ANALYSIS] AT SER-291; THR-293; SER-296 AND THR-406</scope>
    <scope>IDENTIFICATION BY MASS SPECTROMETRY</scope>
</reference>
<dbReference type="EC" id="5.4.99.25" evidence="1"/>
<dbReference type="EMBL" id="CU329671">
    <property type="protein sequence ID" value="CAA20692.1"/>
    <property type="molecule type" value="Genomic_DNA"/>
</dbReference>
<dbReference type="PIR" id="T39326">
    <property type="entry name" value="T39326"/>
</dbReference>
<dbReference type="RefSeq" id="NP_596400.1">
    <property type="nucleotide sequence ID" value="NM_001022320.2"/>
</dbReference>
<dbReference type="SMR" id="O59721"/>
<dbReference type="BioGRID" id="276567">
    <property type="interactions" value="28"/>
</dbReference>
<dbReference type="FunCoup" id="O59721">
    <property type="interactions" value="482"/>
</dbReference>
<dbReference type="STRING" id="284812.O59721"/>
<dbReference type="iPTMnet" id="O59721"/>
<dbReference type="PaxDb" id="4896-SPBC11C11.10.1"/>
<dbReference type="EnsemblFungi" id="SPBC11C11.10.1">
    <property type="protein sequence ID" value="SPBC11C11.10.1:pep"/>
    <property type="gene ID" value="SPBC11C11.10"/>
</dbReference>
<dbReference type="GeneID" id="2540023"/>
<dbReference type="KEGG" id="spo:2540023"/>
<dbReference type="PomBase" id="SPBC11C11.10"/>
<dbReference type="VEuPathDB" id="FungiDB:SPBC11C11.10"/>
<dbReference type="eggNOG" id="KOG2529">
    <property type="taxonomic scope" value="Eukaryota"/>
</dbReference>
<dbReference type="HOGENOM" id="CLU_032087_4_2_1"/>
<dbReference type="InParanoid" id="O59721"/>
<dbReference type="OMA" id="FAINKPC"/>
<dbReference type="PhylomeDB" id="O59721"/>
<dbReference type="PRO" id="PR:O59721"/>
<dbReference type="Proteomes" id="UP000002485">
    <property type="component" value="Chromosome II"/>
</dbReference>
<dbReference type="GO" id="GO:0005739">
    <property type="term" value="C:mitochondrion"/>
    <property type="evidence" value="ECO:0000250"/>
    <property type="project" value="PomBase"/>
</dbReference>
<dbReference type="GO" id="GO:0005634">
    <property type="term" value="C:nucleus"/>
    <property type="evidence" value="ECO:0007005"/>
    <property type="project" value="PomBase"/>
</dbReference>
<dbReference type="GO" id="GO:0009982">
    <property type="term" value="F:pseudouridine synthase activity"/>
    <property type="evidence" value="ECO:0000318"/>
    <property type="project" value="GO_Central"/>
</dbReference>
<dbReference type="GO" id="GO:0003723">
    <property type="term" value="F:RNA binding"/>
    <property type="evidence" value="ECO:0007669"/>
    <property type="project" value="InterPro"/>
</dbReference>
<dbReference type="GO" id="GO:0160148">
    <property type="term" value="F:tRNA pseudouridine(55) synthase activity"/>
    <property type="evidence" value="ECO:0007669"/>
    <property type="project" value="UniProtKB-EC"/>
</dbReference>
<dbReference type="GO" id="GO:1990481">
    <property type="term" value="P:mRNA pseudouridine synthesis"/>
    <property type="evidence" value="ECO:0000318"/>
    <property type="project" value="GO_Central"/>
</dbReference>
<dbReference type="GO" id="GO:0006400">
    <property type="term" value="P:tRNA modification"/>
    <property type="evidence" value="ECO:0000318"/>
    <property type="project" value="GO_Central"/>
</dbReference>
<dbReference type="GO" id="GO:0031119">
    <property type="term" value="P:tRNA pseudouridine synthesis"/>
    <property type="evidence" value="ECO:0000305"/>
    <property type="project" value="PomBase"/>
</dbReference>
<dbReference type="CDD" id="cd02867">
    <property type="entry name" value="PseudoU_synth_TruB_4"/>
    <property type="match status" value="1"/>
</dbReference>
<dbReference type="Gene3D" id="3.30.2350.10">
    <property type="entry name" value="Pseudouridine synthase"/>
    <property type="match status" value="1"/>
</dbReference>
<dbReference type="HAMAP" id="MF_01080">
    <property type="entry name" value="TruB_bact"/>
    <property type="match status" value="1"/>
</dbReference>
<dbReference type="InterPro" id="IPR020103">
    <property type="entry name" value="PsdUridine_synth_cat_dom_sf"/>
</dbReference>
<dbReference type="InterPro" id="IPR002501">
    <property type="entry name" value="PsdUridine_synth_N"/>
</dbReference>
<dbReference type="InterPro" id="IPR014780">
    <property type="entry name" value="tRNA_psdUridine_synth_TruB"/>
</dbReference>
<dbReference type="PANTHER" id="PTHR13767:SF2">
    <property type="entry name" value="PSEUDOURIDYLATE SYNTHASE TRUB1"/>
    <property type="match status" value="1"/>
</dbReference>
<dbReference type="PANTHER" id="PTHR13767">
    <property type="entry name" value="TRNA-PSEUDOURIDINE SYNTHASE"/>
    <property type="match status" value="1"/>
</dbReference>
<dbReference type="Pfam" id="PF01509">
    <property type="entry name" value="TruB_N"/>
    <property type="match status" value="1"/>
</dbReference>
<dbReference type="SUPFAM" id="SSF55120">
    <property type="entry name" value="Pseudouridine synthase"/>
    <property type="match status" value="1"/>
</dbReference>
<keyword id="KW-0413">Isomerase</keyword>
<keyword id="KW-0496">Mitochondrion</keyword>
<keyword id="KW-0539">Nucleus</keyword>
<keyword id="KW-0597">Phosphoprotein</keyword>
<keyword id="KW-1185">Reference proteome</keyword>
<keyword id="KW-0819">tRNA processing</keyword>
<name>PUS4_SCHPO</name>
<protein>
    <recommendedName>
        <fullName>tRNA pseudouridine synthase 4</fullName>
        <ecNumber evidence="1">5.4.99.25</ecNumber>
    </recommendedName>
    <alternativeName>
        <fullName>tRNA pseudouridine(55) synthase</fullName>
        <shortName>Psi55 synthase</shortName>
    </alternativeName>
    <alternativeName>
        <fullName>tRNA pseudouridylate synthase 4</fullName>
    </alternativeName>
    <alternativeName>
        <fullName>tRNA-uridine isomerase 4</fullName>
    </alternativeName>
</protein>
<feature type="chain" id="PRO_0000121975" description="tRNA pseudouridine synthase 4">
    <location>
        <begin position="1"/>
        <end position="407"/>
    </location>
</feature>
<feature type="region of interest" description="Disordered" evidence="3">
    <location>
        <begin position="83"/>
        <end position="105"/>
    </location>
</feature>
<feature type="region of interest" description="Disordered" evidence="3">
    <location>
        <begin position="274"/>
        <end position="298"/>
    </location>
</feature>
<feature type="active site" description="Nucleophile" evidence="2">
    <location>
        <position position="115"/>
    </location>
</feature>
<feature type="modified residue" description="Phosphoserine" evidence="4">
    <location>
        <position position="291"/>
    </location>
</feature>
<feature type="modified residue" description="Phosphothreonine" evidence="4">
    <location>
        <position position="293"/>
    </location>
</feature>
<feature type="modified residue" description="Phosphoserine" evidence="4">
    <location>
        <position position="296"/>
    </location>
</feature>
<feature type="modified residue" description="Phosphothreonine" evidence="4">
    <location>
        <position position="406"/>
    </location>
</feature>
<proteinExistence type="evidence at protein level"/>
<organism>
    <name type="scientific">Schizosaccharomyces pombe (strain 972 / ATCC 24843)</name>
    <name type="common">Fission yeast</name>
    <dbReference type="NCBI Taxonomy" id="284812"/>
    <lineage>
        <taxon>Eukaryota</taxon>
        <taxon>Fungi</taxon>
        <taxon>Dikarya</taxon>
        <taxon>Ascomycota</taxon>
        <taxon>Taphrinomycotina</taxon>
        <taxon>Schizosaccharomycetes</taxon>
        <taxon>Schizosaccharomycetales</taxon>
        <taxon>Schizosaccharomycetaceae</taxon>
        <taxon>Schizosaccharomyces</taxon>
    </lineage>
</organism>
<comment type="function">
    <text evidence="1">Responsible for synthesis of pseudouridine from uracil-55 in the psi GC loop of transfer RNAs. Also catalyzes pseudouridylation of mRNAs with the consensus sequence 5'-GGUUCRA-3'.</text>
</comment>
<comment type="catalytic activity">
    <reaction evidence="1">
        <text>uridine(55) in tRNA = pseudouridine(55) in tRNA</text>
        <dbReference type="Rhea" id="RHEA:42532"/>
        <dbReference type="Rhea" id="RHEA-COMP:10101"/>
        <dbReference type="Rhea" id="RHEA-COMP:10102"/>
        <dbReference type="ChEBI" id="CHEBI:65314"/>
        <dbReference type="ChEBI" id="CHEBI:65315"/>
        <dbReference type="EC" id="5.4.99.25"/>
    </reaction>
</comment>
<comment type="catalytic activity">
    <reaction evidence="1">
        <text>a uridine in mRNA = a pseudouridine in mRNA</text>
        <dbReference type="Rhea" id="RHEA:56644"/>
        <dbReference type="Rhea" id="RHEA-COMP:14658"/>
        <dbReference type="Rhea" id="RHEA-COMP:14659"/>
        <dbReference type="ChEBI" id="CHEBI:65314"/>
        <dbReference type="ChEBI" id="CHEBI:65315"/>
    </reaction>
</comment>
<comment type="subcellular location">
    <subcellularLocation>
        <location evidence="1">Nucleus</location>
    </subcellularLocation>
    <subcellularLocation>
        <location evidence="1">Mitochondrion</location>
    </subcellularLocation>
</comment>
<comment type="similarity">
    <text evidence="5">Belongs to the pseudouridine synthase TruB family.</text>
</comment>
<gene>
    <name type="ORF">SPBC11C11.10</name>
    <name type="ORF">SPBC3B8.13c</name>
</gene>
<sequence length="407" mass="45166">MTVTNTYNPTLFFTRVVFQRITKFTAKANEENEILFYALFVADLCLDMKGGLIAINKPSGRTSAQCLNELKKIISNSELAQYFRPAPPHPNDRNRRRRKSNRLPDIKIGHGGTLDPLASGVLVVGLGTGTKQLSSLLSCMKTYRATALFGCSTDTYDSAGKIIKIAVHIPTKEEILSGLDAFRGDISQLPPLYSALHIQGKRLYEYAREGIPLPESIKARSMHCEELILKDFIPKEEHTYTDPDEFASKEAIESEELLRPIEGGAERHDLLAKTEQDINPQDGDEKINAKSPTTNSVTDVAKDQTVTNPKKRKFEVTDLARGSRPAIGPIAVLDMTVSSGFYVRSLIHDLGRQVNSEAHMVDLVRLKQGSFALDDENCFDFSEFSAPGWEEKLAAAFKIDLKGDETS</sequence>
<accession>O59721</accession>
<evidence type="ECO:0000250" key="1">
    <source>
        <dbReference type="UniProtKB" id="P48567"/>
    </source>
</evidence>
<evidence type="ECO:0000250" key="2">
    <source>
        <dbReference type="UniProtKB" id="P60340"/>
    </source>
</evidence>
<evidence type="ECO:0000256" key="3">
    <source>
        <dbReference type="SAM" id="MobiDB-lite"/>
    </source>
</evidence>
<evidence type="ECO:0000269" key="4">
    <source>
    </source>
</evidence>
<evidence type="ECO:0000305" key="5"/>